<comment type="function">
    <text evidence="1">The glycine cleavage system catalyzes the degradation of glycine. The P protein binds the alpha-amino group of glycine through its pyridoxal phosphate cofactor; CO(2) is released and the remaining methylamine moiety is then transferred to the lipoamide cofactor of the H protein.</text>
</comment>
<comment type="catalytic activity">
    <reaction evidence="1">
        <text>N(6)-[(R)-lipoyl]-L-lysyl-[glycine-cleavage complex H protein] + glycine + H(+) = N(6)-[(R)-S(8)-aminomethyldihydrolipoyl]-L-lysyl-[glycine-cleavage complex H protein] + CO2</text>
        <dbReference type="Rhea" id="RHEA:24304"/>
        <dbReference type="Rhea" id="RHEA-COMP:10494"/>
        <dbReference type="Rhea" id="RHEA-COMP:10495"/>
        <dbReference type="ChEBI" id="CHEBI:15378"/>
        <dbReference type="ChEBI" id="CHEBI:16526"/>
        <dbReference type="ChEBI" id="CHEBI:57305"/>
        <dbReference type="ChEBI" id="CHEBI:83099"/>
        <dbReference type="ChEBI" id="CHEBI:83143"/>
        <dbReference type="EC" id="1.4.4.2"/>
    </reaction>
</comment>
<comment type="cofactor">
    <cofactor evidence="1">
        <name>pyridoxal 5'-phosphate</name>
        <dbReference type="ChEBI" id="CHEBI:597326"/>
    </cofactor>
</comment>
<comment type="subunit">
    <text evidence="1">The glycine cleavage system is composed of four proteins: P, T, L and H. In this organism, the P 'protein' is a heterodimer of two subunits.</text>
</comment>
<comment type="similarity">
    <text evidence="1">Belongs to the GcvP family. C-terminal subunit subfamily.</text>
</comment>
<gene>
    <name evidence="1" type="primary">gcvPB</name>
    <name type="ordered locus">Ta1357</name>
</gene>
<organism>
    <name type="scientific">Thermoplasma acidophilum (strain ATCC 25905 / DSM 1728 / JCM 9062 / NBRC 15155 / AMRC-C165)</name>
    <dbReference type="NCBI Taxonomy" id="273075"/>
    <lineage>
        <taxon>Archaea</taxon>
        <taxon>Methanobacteriati</taxon>
        <taxon>Thermoplasmatota</taxon>
        <taxon>Thermoplasmata</taxon>
        <taxon>Thermoplasmatales</taxon>
        <taxon>Thermoplasmataceae</taxon>
        <taxon>Thermoplasma</taxon>
    </lineage>
</organism>
<keyword id="KW-0560">Oxidoreductase</keyword>
<keyword id="KW-0663">Pyridoxal phosphate</keyword>
<keyword id="KW-1185">Reference proteome</keyword>
<evidence type="ECO:0000255" key="1">
    <source>
        <dbReference type="HAMAP-Rule" id="MF_00713"/>
    </source>
</evidence>
<name>GCSPB_THEAC</name>
<proteinExistence type="inferred from homology"/>
<dbReference type="EC" id="1.4.4.2" evidence="1"/>
<dbReference type="EMBL" id="AL445067">
    <property type="protein sequence ID" value="CAC12478.1"/>
    <property type="molecule type" value="Genomic_DNA"/>
</dbReference>
<dbReference type="RefSeq" id="WP_010901764.1">
    <property type="nucleotide sequence ID" value="NC_002578.1"/>
</dbReference>
<dbReference type="SMR" id="Q9HII2"/>
<dbReference type="FunCoup" id="Q9HII2">
    <property type="interactions" value="72"/>
</dbReference>
<dbReference type="STRING" id="273075.gene:9572584"/>
<dbReference type="PaxDb" id="273075-Ta1357"/>
<dbReference type="EnsemblBacteria" id="CAC12478">
    <property type="protein sequence ID" value="CAC12478"/>
    <property type="gene ID" value="CAC12478"/>
</dbReference>
<dbReference type="KEGG" id="tac:Ta1357"/>
<dbReference type="eggNOG" id="arCOG00076">
    <property type="taxonomic scope" value="Archaea"/>
</dbReference>
<dbReference type="HOGENOM" id="CLU_004620_5_0_2"/>
<dbReference type="InParanoid" id="Q9HII2"/>
<dbReference type="OrthoDB" id="371967at2157"/>
<dbReference type="Proteomes" id="UP000001024">
    <property type="component" value="Chromosome"/>
</dbReference>
<dbReference type="GO" id="GO:0005829">
    <property type="term" value="C:cytosol"/>
    <property type="evidence" value="ECO:0007669"/>
    <property type="project" value="TreeGrafter"/>
</dbReference>
<dbReference type="GO" id="GO:0005960">
    <property type="term" value="C:glycine cleavage complex"/>
    <property type="evidence" value="ECO:0007669"/>
    <property type="project" value="TreeGrafter"/>
</dbReference>
<dbReference type="GO" id="GO:0016594">
    <property type="term" value="F:glycine binding"/>
    <property type="evidence" value="ECO:0007669"/>
    <property type="project" value="TreeGrafter"/>
</dbReference>
<dbReference type="GO" id="GO:0004375">
    <property type="term" value="F:glycine dehydrogenase (decarboxylating) activity"/>
    <property type="evidence" value="ECO:0007669"/>
    <property type="project" value="UniProtKB-EC"/>
</dbReference>
<dbReference type="GO" id="GO:0030170">
    <property type="term" value="F:pyridoxal phosphate binding"/>
    <property type="evidence" value="ECO:0007669"/>
    <property type="project" value="TreeGrafter"/>
</dbReference>
<dbReference type="GO" id="GO:0019464">
    <property type="term" value="P:glycine decarboxylation via glycine cleavage system"/>
    <property type="evidence" value="ECO:0007669"/>
    <property type="project" value="UniProtKB-UniRule"/>
</dbReference>
<dbReference type="CDD" id="cd00613">
    <property type="entry name" value="GDC-P"/>
    <property type="match status" value="1"/>
</dbReference>
<dbReference type="FunFam" id="3.40.640.10:FF:000224">
    <property type="entry name" value="Probable glycine dehydrogenase (decarboxylating) subunit 2"/>
    <property type="match status" value="1"/>
</dbReference>
<dbReference type="Gene3D" id="6.20.440.10">
    <property type="match status" value="1"/>
</dbReference>
<dbReference type="Gene3D" id="3.90.1150.10">
    <property type="entry name" value="Aspartate Aminotransferase, domain 1"/>
    <property type="match status" value="1"/>
</dbReference>
<dbReference type="Gene3D" id="3.40.640.10">
    <property type="entry name" value="Type I PLP-dependent aspartate aminotransferase-like (Major domain)"/>
    <property type="match status" value="1"/>
</dbReference>
<dbReference type="HAMAP" id="MF_00713">
    <property type="entry name" value="GcvPB"/>
    <property type="match status" value="1"/>
</dbReference>
<dbReference type="InterPro" id="IPR000192">
    <property type="entry name" value="Aminotrans_V_dom"/>
</dbReference>
<dbReference type="InterPro" id="IPR023012">
    <property type="entry name" value="GcvPB"/>
</dbReference>
<dbReference type="InterPro" id="IPR049316">
    <property type="entry name" value="GDC-P_C"/>
</dbReference>
<dbReference type="InterPro" id="IPR020581">
    <property type="entry name" value="GDC_P"/>
</dbReference>
<dbReference type="InterPro" id="IPR015424">
    <property type="entry name" value="PyrdxlP-dep_Trfase"/>
</dbReference>
<dbReference type="InterPro" id="IPR015421">
    <property type="entry name" value="PyrdxlP-dep_Trfase_major"/>
</dbReference>
<dbReference type="InterPro" id="IPR015422">
    <property type="entry name" value="PyrdxlP-dep_Trfase_small"/>
</dbReference>
<dbReference type="NCBIfam" id="NF003346">
    <property type="entry name" value="PRK04366.1"/>
    <property type="match status" value="1"/>
</dbReference>
<dbReference type="PANTHER" id="PTHR11773:SF1">
    <property type="entry name" value="GLYCINE DEHYDROGENASE (DECARBOXYLATING), MITOCHONDRIAL"/>
    <property type="match status" value="1"/>
</dbReference>
<dbReference type="PANTHER" id="PTHR11773">
    <property type="entry name" value="GLYCINE DEHYDROGENASE, DECARBOXYLATING"/>
    <property type="match status" value="1"/>
</dbReference>
<dbReference type="Pfam" id="PF00266">
    <property type="entry name" value="Aminotran_5"/>
    <property type="match status" value="1"/>
</dbReference>
<dbReference type="Pfam" id="PF21478">
    <property type="entry name" value="GcvP2_C"/>
    <property type="match status" value="1"/>
</dbReference>
<dbReference type="SUPFAM" id="SSF53383">
    <property type="entry name" value="PLP-dependent transferases"/>
    <property type="match status" value="1"/>
</dbReference>
<protein>
    <recommendedName>
        <fullName evidence="1">Probable glycine dehydrogenase (decarboxylating) subunit 2</fullName>
        <ecNumber evidence="1">1.4.4.2</ecNumber>
    </recommendedName>
    <alternativeName>
        <fullName evidence="1">Glycine cleavage system P-protein subunit 2</fullName>
    </alternativeName>
    <alternativeName>
        <fullName evidence="1">Glycine decarboxylase subunit 2</fullName>
    </alternativeName>
    <alternativeName>
        <fullName evidence="1">Glycine dehydrogenase (aminomethyl-transferring) subunit 2</fullName>
    </alternativeName>
</protein>
<feature type="chain" id="PRO_0000167033" description="Probable glycine dehydrogenase (decarboxylating) subunit 2">
    <location>
        <begin position="1"/>
        <end position="472"/>
    </location>
</feature>
<feature type="modified residue" description="N6-(pyridoxal phosphate)lysine" evidence="1">
    <location>
        <position position="268"/>
    </location>
</feature>
<sequence>MEFRQAYYDEPLIKDIKSDTSFKLSEDVDENLLPQDMRRTDLKLPQVSEVDVVRHYTRLSQMNYTVDVGIYPLGSCTMKYNPKYADRIASFAEFRNIHPFQPESTVQGTLQIMYELQEFLKKISDMDAVTLQPMAGADGEFTGILIIKKYFEDLHEDRTEIIVPDSAHGTNPASATMGGFDVVEIPSNSEGMVDLNALKAAISKKTAALMITNPNTLGIFEQNITEIAKILHDAGALLYYDGANLNAIFGITSPGLMGFDIVHFNLHKSFATPHGGGGPGAGPVAVKSFLSDFLPVPVVGYDGKRYFLDYGKKKSIGRVSSFYGSFSILLRAWSYVIRNGDDGLKNATIRAVLNSNYLKKKVEGYYEVPYYPLKKHEFVLSTEKTGRRALDIGKYLLDFGIHSPTVYFPLIVKEAMMIEPTETVSKDDLDRYADVLISALKVPEDDLKSRPRNTAVSRIDEVKAARDLKVRW</sequence>
<reference key="1">
    <citation type="journal article" date="2000" name="Nature">
        <title>The genome sequence of the thermoacidophilic scavenger Thermoplasma acidophilum.</title>
        <authorList>
            <person name="Ruepp A."/>
            <person name="Graml W."/>
            <person name="Santos-Martinez M.-L."/>
            <person name="Koretke K.K."/>
            <person name="Volker C."/>
            <person name="Mewes H.-W."/>
            <person name="Frishman D."/>
            <person name="Stocker S."/>
            <person name="Lupas A.N."/>
            <person name="Baumeister W."/>
        </authorList>
    </citation>
    <scope>NUCLEOTIDE SEQUENCE [LARGE SCALE GENOMIC DNA]</scope>
    <source>
        <strain>ATCC 25905 / DSM 1728 / JCM 9062 / NBRC 15155 / AMRC-C165</strain>
    </source>
</reference>
<accession>Q9HII2</accession>